<name>SYH_MYCS5</name>
<gene>
    <name evidence="1" type="primary">hisS</name>
    <name type="ordered locus">MS53_0437</name>
</gene>
<keyword id="KW-0030">Aminoacyl-tRNA synthetase</keyword>
<keyword id="KW-0067">ATP-binding</keyword>
<keyword id="KW-0963">Cytoplasm</keyword>
<keyword id="KW-0436">Ligase</keyword>
<keyword id="KW-0547">Nucleotide-binding</keyword>
<keyword id="KW-0648">Protein biosynthesis</keyword>
<keyword id="KW-1185">Reference proteome</keyword>
<reference key="1">
    <citation type="journal article" date="2005" name="J. Bacteriol.">
        <title>Swine and poultry pathogens: the complete genome sequences of two strains of Mycoplasma hyopneumoniae and a strain of Mycoplasma synoviae.</title>
        <authorList>
            <person name="Vasconcelos A.T.R."/>
            <person name="Ferreira H.B."/>
            <person name="Bizarro C.V."/>
            <person name="Bonatto S.L."/>
            <person name="Carvalho M.O."/>
            <person name="Pinto P.M."/>
            <person name="Almeida D.F."/>
            <person name="Almeida L.G.P."/>
            <person name="Almeida R."/>
            <person name="Alves-Junior L."/>
            <person name="Assuncao E.N."/>
            <person name="Azevedo V.A.C."/>
            <person name="Bogo M.R."/>
            <person name="Brigido M.M."/>
            <person name="Brocchi M."/>
            <person name="Burity H.A."/>
            <person name="Camargo A.A."/>
            <person name="Camargo S.S."/>
            <person name="Carepo M.S."/>
            <person name="Carraro D.M."/>
            <person name="de Mattos Cascardo J.C."/>
            <person name="Castro L.A."/>
            <person name="Cavalcanti G."/>
            <person name="Chemale G."/>
            <person name="Collevatti R.G."/>
            <person name="Cunha C.W."/>
            <person name="Dallagiovanna B."/>
            <person name="Dambros B.P."/>
            <person name="Dellagostin O.A."/>
            <person name="Falcao C."/>
            <person name="Fantinatti-Garboggini F."/>
            <person name="Felipe M.S.S."/>
            <person name="Fiorentin L."/>
            <person name="Franco G.R."/>
            <person name="Freitas N.S.A."/>
            <person name="Frias D."/>
            <person name="Grangeiro T.B."/>
            <person name="Grisard E.C."/>
            <person name="Guimaraes C.T."/>
            <person name="Hungria M."/>
            <person name="Jardim S.N."/>
            <person name="Krieger M.A."/>
            <person name="Laurino J.P."/>
            <person name="Lima L.F.A."/>
            <person name="Lopes M.I."/>
            <person name="Loreto E.L.S."/>
            <person name="Madeira H.M.F."/>
            <person name="Manfio G.P."/>
            <person name="Maranhao A.Q."/>
            <person name="Martinkovics C.T."/>
            <person name="Medeiros S.R.B."/>
            <person name="Moreira M.A.M."/>
            <person name="Neiva M."/>
            <person name="Ramalho-Neto C.E."/>
            <person name="Nicolas M.F."/>
            <person name="Oliveira S.C."/>
            <person name="Paixao R.F.C."/>
            <person name="Pedrosa F.O."/>
            <person name="Pena S.D.J."/>
            <person name="Pereira M."/>
            <person name="Pereira-Ferrari L."/>
            <person name="Piffer I."/>
            <person name="Pinto L.S."/>
            <person name="Potrich D.P."/>
            <person name="Salim A.C.M."/>
            <person name="Santos F.R."/>
            <person name="Schmitt R."/>
            <person name="Schneider M.P.C."/>
            <person name="Schrank A."/>
            <person name="Schrank I.S."/>
            <person name="Schuck A.F."/>
            <person name="Seuanez H.N."/>
            <person name="Silva D.W."/>
            <person name="Silva R."/>
            <person name="Silva S.C."/>
            <person name="Soares C.M.A."/>
            <person name="Souza K.R.L."/>
            <person name="Souza R.C."/>
            <person name="Staats C.C."/>
            <person name="Steffens M.B.R."/>
            <person name="Teixeira S.M.R."/>
            <person name="Urmenyi T.P."/>
            <person name="Vainstein M.H."/>
            <person name="Zuccherato L.W."/>
            <person name="Simpson A.J.G."/>
            <person name="Zaha A."/>
        </authorList>
    </citation>
    <scope>NUCLEOTIDE SEQUENCE [LARGE SCALE GENOMIC DNA]</scope>
    <source>
        <strain>53</strain>
    </source>
</reference>
<accession>Q4A5X2</accession>
<sequence>MKYQRVKGTQDYGVEKAFLKDAVESLFLKEVRLHGFEYVELPTLEHAQLFRSTVAQSDIGNKEMYEFLDKSQRELCLRPEMTANFVRAFVQNKWHAASAENKYAYVGKVFRYERPQKGRYREFTQAGVEFVGKADFFKDLYVITLVLRLLAKLHIKYTLKLNYISNKETRKKYEETLHKYLLEYKDQLSESSQKRLETGNVFRVLDDKEDSQKDFVKNAPKLSDFYSEEDKEYVKNIKRGLDTYHGLEYQFDEQVVRGLDYYDDLVFEVSIKDSKAAQDVIIGGGRYSNLIKDLEGPETSSIGFAMGVDRVVDYLMDQEVYKEHLDKLETAHSENEYYFWAHPEASYKLNFFVWFFNLQLNEHISSSLLFDYDSPNRNKAFEKAKKLNSKAFVTLEEDNSLTVYDFKYGTKKDADLKEQYHHLDFTSLLDSRHFDNLFDSNLFKPSPKELMCMCSAFRNRFGDSKALLKFAKQFHYSEDDVYFSDQKIKKSKWKSAKS</sequence>
<feature type="chain" id="PRO_0000136207" description="Histidine--tRNA ligase">
    <location>
        <begin position="1"/>
        <end position="498"/>
    </location>
</feature>
<dbReference type="EC" id="6.1.1.21" evidence="1"/>
<dbReference type="EMBL" id="AE017245">
    <property type="protein sequence ID" value="AAZ43849.1"/>
    <property type="molecule type" value="Genomic_DNA"/>
</dbReference>
<dbReference type="RefSeq" id="WP_011283580.1">
    <property type="nucleotide sequence ID" value="NC_007294.1"/>
</dbReference>
<dbReference type="SMR" id="Q4A5X2"/>
<dbReference type="STRING" id="262723.MS53_0437"/>
<dbReference type="KEGG" id="msy:MS53_0437"/>
<dbReference type="eggNOG" id="COG0124">
    <property type="taxonomic scope" value="Bacteria"/>
</dbReference>
<dbReference type="HOGENOM" id="CLU_025113_1_2_14"/>
<dbReference type="OrthoDB" id="9800814at2"/>
<dbReference type="Proteomes" id="UP000000549">
    <property type="component" value="Chromosome"/>
</dbReference>
<dbReference type="GO" id="GO:0005737">
    <property type="term" value="C:cytoplasm"/>
    <property type="evidence" value="ECO:0007669"/>
    <property type="project" value="UniProtKB-SubCell"/>
</dbReference>
<dbReference type="GO" id="GO:0005524">
    <property type="term" value="F:ATP binding"/>
    <property type="evidence" value="ECO:0007669"/>
    <property type="project" value="UniProtKB-UniRule"/>
</dbReference>
<dbReference type="GO" id="GO:0004821">
    <property type="term" value="F:histidine-tRNA ligase activity"/>
    <property type="evidence" value="ECO:0007669"/>
    <property type="project" value="UniProtKB-UniRule"/>
</dbReference>
<dbReference type="GO" id="GO:0006427">
    <property type="term" value="P:histidyl-tRNA aminoacylation"/>
    <property type="evidence" value="ECO:0007669"/>
    <property type="project" value="UniProtKB-UniRule"/>
</dbReference>
<dbReference type="CDD" id="cd00773">
    <property type="entry name" value="HisRS-like_core"/>
    <property type="match status" value="1"/>
</dbReference>
<dbReference type="Gene3D" id="3.30.930.10">
    <property type="entry name" value="Bira Bifunctional Protein, Domain 2"/>
    <property type="match status" value="1"/>
</dbReference>
<dbReference type="HAMAP" id="MF_00127">
    <property type="entry name" value="His_tRNA_synth"/>
    <property type="match status" value="1"/>
</dbReference>
<dbReference type="InterPro" id="IPR006195">
    <property type="entry name" value="aa-tRNA-synth_II"/>
</dbReference>
<dbReference type="InterPro" id="IPR045864">
    <property type="entry name" value="aa-tRNA-synth_II/BPL/LPL"/>
</dbReference>
<dbReference type="InterPro" id="IPR015807">
    <property type="entry name" value="His-tRNA-ligase"/>
</dbReference>
<dbReference type="InterPro" id="IPR041715">
    <property type="entry name" value="HisRS-like_core"/>
</dbReference>
<dbReference type="InterPro" id="IPR004516">
    <property type="entry name" value="HisRS/HisZ"/>
</dbReference>
<dbReference type="NCBIfam" id="TIGR00442">
    <property type="entry name" value="hisS"/>
    <property type="match status" value="1"/>
</dbReference>
<dbReference type="PANTHER" id="PTHR43707:SF1">
    <property type="entry name" value="HISTIDINE--TRNA LIGASE, MITOCHONDRIAL-RELATED"/>
    <property type="match status" value="1"/>
</dbReference>
<dbReference type="PANTHER" id="PTHR43707">
    <property type="entry name" value="HISTIDYL-TRNA SYNTHETASE"/>
    <property type="match status" value="1"/>
</dbReference>
<dbReference type="Pfam" id="PF13393">
    <property type="entry name" value="tRNA-synt_His"/>
    <property type="match status" value="1"/>
</dbReference>
<dbReference type="PIRSF" id="PIRSF001549">
    <property type="entry name" value="His-tRNA_synth"/>
    <property type="match status" value="1"/>
</dbReference>
<dbReference type="SUPFAM" id="SSF55681">
    <property type="entry name" value="Class II aaRS and biotin synthetases"/>
    <property type="match status" value="1"/>
</dbReference>
<dbReference type="PROSITE" id="PS50862">
    <property type="entry name" value="AA_TRNA_LIGASE_II"/>
    <property type="match status" value="1"/>
</dbReference>
<evidence type="ECO:0000255" key="1">
    <source>
        <dbReference type="HAMAP-Rule" id="MF_00127"/>
    </source>
</evidence>
<comment type="catalytic activity">
    <reaction evidence="1">
        <text>tRNA(His) + L-histidine + ATP = L-histidyl-tRNA(His) + AMP + diphosphate + H(+)</text>
        <dbReference type="Rhea" id="RHEA:17313"/>
        <dbReference type="Rhea" id="RHEA-COMP:9665"/>
        <dbReference type="Rhea" id="RHEA-COMP:9689"/>
        <dbReference type="ChEBI" id="CHEBI:15378"/>
        <dbReference type="ChEBI" id="CHEBI:30616"/>
        <dbReference type="ChEBI" id="CHEBI:33019"/>
        <dbReference type="ChEBI" id="CHEBI:57595"/>
        <dbReference type="ChEBI" id="CHEBI:78442"/>
        <dbReference type="ChEBI" id="CHEBI:78527"/>
        <dbReference type="ChEBI" id="CHEBI:456215"/>
        <dbReference type="EC" id="6.1.1.21"/>
    </reaction>
</comment>
<comment type="subunit">
    <text evidence="1">Homodimer.</text>
</comment>
<comment type="subcellular location">
    <subcellularLocation>
        <location evidence="1">Cytoplasm</location>
    </subcellularLocation>
</comment>
<comment type="similarity">
    <text evidence="1">Belongs to the class-II aminoacyl-tRNA synthetase family.</text>
</comment>
<protein>
    <recommendedName>
        <fullName evidence="1">Histidine--tRNA ligase</fullName>
        <ecNumber evidence="1">6.1.1.21</ecNumber>
    </recommendedName>
    <alternativeName>
        <fullName evidence="1">Histidyl-tRNA synthetase</fullName>
        <shortName evidence="1">HisRS</shortName>
    </alternativeName>
</protein>
<organism>
    <name type="scientific">Mycoplasmopsis synoviae (strain 53)</name>
    <name type="common">Mycoplasma synoviae</name>
    <dbReference type="NCBI Taxonomy" id="262723"/>
    <lineage>
        <taxon>Bacteria</taxon>
        <taxon>Bacillati</taxon>
        <taxon>Mycoplasmatota</taxon>
        <taxon>Mycoplasmoidales</taxon>
        <taxon>Metamycoplasmataceae</taxon>
        <taxon>Mycoplasmopsis</taxon>
    </lineage>
</organism>
<proteinExistence type="inferred from homology"/>